<comment type="subcellular location">
    <subcellularLocation>
        <location>Plastid</location>
        <location>Chloroplast</location>
    </subcellularLocation>
</comment>
<comment type="similarity">
    <text evidence="1">Belongs to the bacterial ribosomal protein bL28 family.</text>
</comment>
<name>RK28_CYAM1</name>
<gene>
    <name evidence="1" type="primary">rpl28</name>
</gene>
<proteinExistence type="inferred from homology"/>
<dbReference type="EMBL" id="AB002583">
    <property type="protein sequence ID" value="BAC76105.1"/>
    <property type="molecule type" value="Genomic_DNA"/>
</dbReference>
<dbReference type="RefSeq" id="NP_848943.1">
    <property type="nucleotide sequence ID" value="NC_004799.1"/>
</dbReference>
<dbReference type="SMR" id="Q85G82"/>
<dbReference type="STRING" id="280699.Q85G82"/>
<dbReference type="EnsemblPlants" id="CMV011CT">
    <property type="protein sequence ID" value="CMV011CT"/>
    <property type="gene ID" value="CMV011C"/>
</dbReference>
<dbReference type="GeneID" id="844982"/>
<dbReference type="Gramene" id="CMV011CT">
    <property type="protein sequence ID" value="CMV011CT"/>
    <property type="gene ID" value="CMV011C"/>
</dbReference>
<dbReference type="KEGG" id="cme:CymeCp011"/>
<dbReference type="HOGENOM" id="CLU_064548_8_0_1"/>
<dbReference type="Proteomes" id="UP000007014">
    <property type="component" value="Chloroplast"/>
</dbReference>
<dbReference type="GO" id="GO:0009507">
    <property type="term" value="C:chloroplast"/>
    <property type="evidence" value="ECO:0007669"/>
    <property type="project" value="UniProtKB-SubCell"/>
</dbReference>
<dbReference type="GO" id="GO:1990904">
    <property type="term" value="C:ribonucleoprotein complex"/>
    <property type="evidence" value="ECO:0007669"/>
    <property type="project" value="UniProtKB-KW"/>
</dbReference>
<dbReference type="GO" id="GO:0005840">
    <property type="term" value="C:ribosome"/>
    <property type="evidence" value="ECO:0007669"/>
    <property type="project" value="UniProtKB-KW"/>
</dbReference>
<dbReference type="GO" id="GO:0003735">
    <property type="term" value="F:structural constituent of ribosome"/>
    <property type="evidence" value="ECO:0007669"/>
    <property type="project" value="InterPro"/>
</dbReference>
<dbReference type="GO" id="GO:0006412">
    <property type="term" value="P:translation"/>
    <property type="evidence" value="ECO:0007669"/>
    <property type="project" value="UniProtKB-UniRule"/>
</dbReference>
<dbReference type="Gene3D" id="2.30.170.40">
    <property type="entry name" value="Ribosomal protein L28/L24"/>
    <property type="match status" value="1"/>
</dbReference>
<dbReference type="HAMAP" id="MF_00373">
    <property type="entry name" value="Ribosomal_bL28"/>
    <property type="match status" value="1"/>
</dbReference>
<dbReference type="InterPro" id="IPR050096">
    <property type="entry name" value="Bacterial_rp_bL28"/>
</dbReference>
<dbReference type="InterPro" id="IPR026569">
    <property type="entry name" value="Ribosomal_bL28"/>
</dbReference>
<dbReference type="InterPro" id="IPR034704">
    <property type="entry name" value="Ribosomal_bL28/bL31-like_sf"/>
</dbReference>
<dbReference type="InterPro" id="IPR001383">
    <property type="entry name" value="Ribosomal_bL28_bact-type"/>
</dbReference>
<dbReference type="InterPro" id="IPR037147">
    <property type="entry name" value="Ribosomal_bL28_sf"/>
</dbReference>
<dbReference type="NCBIfam" id="TIGR00009">
    <property type="entry name" value="L28"/>
    <property type="match status" value="1"/>
</dbReference>
<dbReference type="PANTHER" id="PTHR39080">
    <property type="entry name" value="50S RIBOSOMAL PROTEIN L28"/>
    <property type="match status" value="1"/>
</dbReference>
<dbReference type="PANTHER" id="PTHR39080:SF1">
    <property type="entry name" value="LARGE RIBOSOMAL SUBUNIT PROTEIN BL28A"/>
    <property type="match status" value="1"/>
</dbReference>
<dbReference type="Pfam" id="PF00830">
    <property type="entry name" value="Ribosomal_L28"/>
    <property type="match status" value="1"/>
</dbReference>
<dbReference type="SUPFAM" id="SSF143800">
    <property type="entry name" value="L28p-like"/>
    <property type="match status" value="1"/>
</dbReference>
<keyword id="KW-0150">Chloroplast</keyword>
<keyword id="KW-0934">Plastid</keyword>
<keyword id="KW-1185">Reference proteome</keyword>
<keyword id="KW-0687">Ribonucleoprotein</keyword>
<keyword id="KW-0689">Ribosomal protein</keyword>
<reference key="1">
    <citation type="journal article" date="2003" name="DNA Res.">
        <title>Complete sequence and analysis of the plastid genome of the unicellular red alga Cyanidioschyzon merolae.</title>
        <authorList>
            <person name="Ohta N."/>
            <person name="Matsuzaki M."/>
            <person name="Misumi O."/>
            <person name="Miyagishima S.-Y."/>
            <person name="Nozaki H."/>
            <person name="Tanaka K."/>
            <person name="Shin-i T."/>
            <person name="Kohara Y."/>
            <person name="Kuroiwa T."/>
        </authorList>
    </citation>
    <scope>NUCLEOTIDE SEQUENCE [LARGE SCALE GENOMIC DNA]</scope>
    <source>
        <strain>NIES-3377 / 10D</strain>
    </source>
</reference>
<geneLocation type="chloroplast"/>
<protein>
    <recommendedName>
        <fullName evidence="1">Large ribosomal subunit protein bL28c</fullName>
    </recommendedName>
    <alternativeName>
        <fullName evidence="2">50S ribosomal protein L28, chloroplastic</fullName>
    </alternativeName>
</protein>
<accession>Q85G82</accession>
<organism>
    <name type="scientific">Cyanidioschyzon merolae (strain NIES-3377 / 10D)</name>
    <name type="common">Unicellular red alga</name>
    <dbReference type="NCBI Taxonomy" id="280699"/>
    <lineage>
        <taxon>Eukaryota</taxon>
        <taxon>Rhodophyta</taxon>
        <taxon>Bangiophyceae</taxon>
        <taxon>Cyanidiales</taxon>
        <taxon>Cyanidiaceae</taxon>
        <taxon>Cyanidioschyzon</taxon>
    </lineage>
</organism>
<evidence type="ECO:0000255" key="1">
    <source>
        <dbReference type="HAMAP-Rule" id="MF_00373"/>
    </source>
</evidence>
<evidence type="ECO:0000305" key="2"/>
<feature type="chain" id="PRO_0000178601" description="Large ribosomal subunit protein bL28c">
    <location>
        <begin position="1"/>
        <end position="75"/>
    </location>
</feature>
<sequence length="75" mass="8950">MSRVCPLTLKKCNHAFRVTYSHKRNHRRQFVNLQKKRIFINNEWVVLKISTKAIKTLKSKTLKSKTFSNARLLHL</sequence>